<accession>Q0V7S0</accession>
<accession>Q84WE5</accession>
<accession>Q9FX05</accession>
<comment type="sequence caution" evidence="3">
    <conflict type="erroneous gene model prediction">
        <sequence resource="EMBL-CDS" id="AAG11425"/>
    </conflict>
</comment>
<comment type="sequence caution" evidence="3">
    <conflict type="erroneous initiation">
        <sequence resource="EMBL-CDS" id="AAO41958"/>
    </conflict>
</comment>
<dbReference type="EMBL" id="AC015449">
    <property type="protein sequence ID" value="AAG11425.1"/>
    <property type="status" value="ALT_SEQ"/>
    <property type="molecule type" value="Genomic_DNA"/>
</dbReference>
<dbReference type="EMBL" id="CP002684">
    <property type="protein sequence ID" value="AEE32158.1"/>
    <property type="molecule type" value="Genomic_DNA"/>
</dbReference>
<dbReference type="EMBL" id="BT026500">
    <property type="protein sequence ID" value="ABH04607.1"/>
    <property type="molecule type" value="mRNA"/>
</dbReference>
<dbReference type="EMBL" id="BT003911">
    <property type="protein sequence ID" value="AAO41958.1"/>
    <property type="status" value="ALT_INIT"/>
    <property type="molecule type" value="mRNA"/>
</dbReference>
<dbReference type="PIR" id="B96514">
    <property type="entry name" value="B96514"/>
</dbReference>
<dbReference type="RefSeq" id="NP_001323147.1">
    <property type="nucleotide sequence ID" value="NM_001333271.1"/>
</dbReference>
<dbReference type="RefSeq" id="NP_001323148.1">
    <property type="nucleotide sequence ID" value="NM_001333272.1"/>
</dbReference>
<dbReference type="RefSeq" id="NP_175167.2">
    <property type="nucleotide sequence ID" value="NM_103628.5"/>
</dbReference>
<dbReference type="SMR" id="Q0V7S0"/>
<dbReference type="BioGRID" id="26362">
    <property type="interactions" value="11"/>
</dbReference>
<dbReference type="FunCoup" id="Q0V7S0">
    <property type="interactions" value="503"/>
</dbReference>
<dbReference type="STRING" id="3702.Q0V7S0"/>
<dbReference type="iPTMnet" id="Q0V7S0"/>
<dbReference type="PaxDb" id="3702-AT1G47340.1"/>
<dbReference type="ProteomicsDB" id="230813"/>
<dbReference type="EnsemblPlants" id="AT1G47340.1">
    <property type="protein sequence ID" value="AT1G47340.1"/>
    <property type="gene ID" value="AT1G47340"/>
</dbReference>
<dbReference type="GeneID" id="841137"/>
<dbReference type="Gramene" id="AT1G47340.1">
    <property type="protein sequence ID" value="AT1G47340.1"/>
    <property type="gene ID" value="AT1G47340"/>
</dbReference>
<dbReference type="KEGG" id="ath:AT1G47340"/>
<dbReference type="Araport" id="AT1G47340"/>
<dbReference type="TAIR" id="AT1G47340"/>
<dbReference type="eggNOG" id="ENOG502S9E8">
    <property type="taxonomic scope" value="Eukaryota"/>
</dbReference>
<dbReference type="HOGENOM" id="CLU_027176_8_1_1"/>
<dbReference type="InParanoid" id="Q0V7S0"/>
<dbReference type="PhylomeDB" id="Q0V7S0"/>
<dbReference type="PRO" id="PR:Q0V7S0"/>
<dbReference type="Proteomes" id="UP000006548">
    <property type="component" value="Chromosome 1"/>
</dbReference>
<dbReference type="ExpressionAtlas" id="Q0V7S0">
    <property type="expression patterns" value="baseline and differential"/>
</dbReference>
<dbReference type="CDD" id="cd22157">
    <property type="entry name" value="F-box_AtFBW1-like"/>
    <property type="match status" value="1"/>
</dbReference>
<dbReference type="Gene3D" id="1.20.1280.50">
    <property type="match status" value="1"/>
</dbReference>
<dbReference type="InterPro" id="IPR013187">
    <property type="entry name" value="F-box-assoc_dom_typ3"/>
</dbReference>
<dbReference type="InterPro" id="IPR017451">
    <property type="entry name" value="F-box-assoc_interact_dom"/>
</dbReference>
<dbReference type="InterPro" id="IPR036047">
    <property type="entry name" value="F-box-like_dom_sf"/>
</dbReference>
<dbReference type="InterPro" id="IPR001810">
    <property type="entry name" value="F-box_dom"/>
</dbReference>
<dbReference type="NCBIfam" id="TIGR01640">
    <property type="entry name" value="F_box_assoc_1"/>
    <property type="match status" value="1"/>
</dbReference>
<dbReference type="PANTHER" id="PTHR31111">
    <property type="entry name" value="BNAA05G37150D PROTEIN-RELATED"/>
    <property type="match status" value="1"/>
</dbReference>
<dbReference type="PANTHER" id="PTHR31111:SF130">
    <property type="entry name" value="F-BOX ASSOCIATED UBIQUITINATION EFFECTOR FAMILY PROTEIN"/>
    <property type="match status" value="1"/>
</dbReference>
<dbReference type="Pfam" id="PF00646">
    <property type="entry name" value="F-box"/>
    <property type="match status" value="1"/>
</dbReference>
<dbReference type="Pfam" id="PF08268">
    <property type="entry name" value="FBA_3"/>
    <property type="match status" value="1"/>
</dbReference>
<dbReference type="SMART" id="SM00256">
    <property type="entry name" value="FBOX"/>
    <property type="match status" value="1"/>
</dbReference>
<dbReference type="SUPFAM" id="SSF81383">
    <property type="entry name" value="F-box domain"/>
    <property type="match status" value="1"/>
</dbReference>
<dbReference type="PROSITE" id="PS50181">
    <property type="entry name" value="FBOX"/>
    <property type="match status" value="1"/>
</dbReference>
<feature type="chain" id="PRO_0000283315" description="F-box protein At1g47340">
    <location>
        <begin position="1"/>
        <end position="459"/>
    </location>
</feature>
<feature type="domain" description="F-box" evidence="1">
    <location>
        <begin position="31"/>
        <end position="76"/>
    </location>
</feature>
<feature type="region of interest" description="Disordered" evidence="2">
    <location>
        <begin position="434"/>
        <end position="459"/>
    </location>
</feature>
<feature type="compositionally biased region" description="Acidic residues" evidence="2">
    <location>
        <begin position="438"/>
        <end position="459"/>
    </location>
</feature>
<sequence>MLKKTAPNSPKRRRCSSFAAVDLVGSANRTFMVSVSLPKELILEILKRLPAKSVKRFHCVSKQWASMLSCPHFRELFLTRSSSAQPRLLFAIEKHNQWSLFSLPQRLTPYEKSSSSSVVVTPEFHMKFPPDGMLIYPRHDRRFSFGYASGLMYFYGMWINEHDYDGVPVICNPLTGRYASLPFLERYRKAFSFFGFDPIEKQYKVLFMAYPSGPDHHTVLTFGTGEMSWRKIECSVKHDIVSDGICINGVMYYLGDTSEFMTAFVVVCFDVRSETFSFIYPGSYCEVINYKGKLGLVFCDDYTDDAIELRLWVLEDKEKIEWSKYAYKLKDEKFSAHYVSIVGVSAAGEIVLSMADFTSKQPFYVFYYNPERNTLQCTEIQGFEEHHGTFDRRSRVRVFVDDCSSFYRFADHVEYLNVDEPKLLKSKIYDGPNAKIEWEEEEEEDEDEDQEKEEEDQWS</sequence>
<keyword id="KW-1185">Reference proteome</keyword>
<name>FB39_ARATH</name>
<protein>
    <recommendedName>
        <fullName>F-box protein At1g47340</fullName>
    </recommendedName>
</protein>
<gene>
    <name type="ordered locus">At1g47340</name>
    <name type="ORF">T3F24.5</name>
</gene>
<organism>
    <name type="scientific">Arabidopsis thaliana</name>
    <name type="common">Mouse-ear cress</name>
    <dbReference type="NCBI Taxonomy" id="3702"/>
    <lineage>
        <taxon>Eukaryota</taxon>
        <taxon>Viridiplantae</taxon>
        <taxon>Streptophyta</taxon>
        <taxon>Embryophyta</taxon>
        <taxon>Tracheophyta</taxon>
        <taxon>Spermatophyta</taxon>
        <taxon>Magnoliopsida</taxon>
        <taxon>eudicotyledons</taxon>
        <taxon>Gunneridae</taxon>
        <taxon>Pentapetalae</taxon>
        <taxon>rosids</taxon>
        <taxon>malvids</taxon>
        <taxon>Brassicales</taxon>
        <taxon>Brassicaceae</taxon>
        <taxon>Camelineae</taxon>
        <taxon>Arabidopsis</taxon>
    </lineage>
</organism>
<evidence type="ECO:0000255" key="1">
    <source>
        <dbReference type="PROSITE-ProRule" id="PRU00080"/>
    </source>
</evidence>
<evidence type="ECO:0000256" key="2">
    <source>
        <dbReference type="SAM" id="MobiDB-lite"/>
    </source>
</evidence>
<evidence type="ECO:0000305" key="3"/>
<proteinExistence type="evidence at transcript level"/>
<reference key="1">
    <citation type="journal article" date="2000" name="Nature">
        <title>Sequence and analysis of chromosome 1 of the plant Arabidopsis thaliana.</title>
        <authorList>
            <person name="Theologis A."/>
            <person name="Ecker J.R."/>
            <person name="Palm C.J."/>
            <person name="Federspiel N.A."/>
            <person name="Kaul S."/>
            <person name="White O."/>
            <person name="Alonso J."/>
            <person name="Altafi H."/>
            <person name="Araujo R."/>
            <person name="Bowman C.L."/>
            <person name="Brooks S.Y."/>
            <person name="Buehler E."/>
            <person name="Chan A."/>
            <person name="Chao Q."/>
            <person name="Chen H."/>
            <person name="Cheuk R.F."/>
            <person name="Chin C.W."/>
            <person name="Chung M.K."/>
            <person name="Conn L."/>
            <person name="Conway A.B."/>
            <person name="Conway A.R."/>
            <person name="Creasy T.H."/>
            <person name="Dewar K."/>
            <person name="Dunn P."/>
            <person name="Etgu P."/>
            <person name="Feldblyum T.V."/>
            <person name="Feng J.-D."/>
            <person name="Fong B."/>
            <person name="Fujii C.Y."/>
            <person name="Gill J.E."/>
            <person name="Goldsmith A.D."/>
            <person name="Haas B."/>
            <person name="Hansen N.F."/>
            <person name="Hughes B."/>
            <person name="Huizar L."/>
            <person name="Hunter J.L."/>
            <person name="Jenkins J."/>
            <person name="Johnson-Hopson C."/>
            <person name="Khan S."/>
            <person name="Khaykin E."/>
            <person name="Kim C.J."/>
            <person name="Koo H.L."/>
            <person name="Kremenetskaia I."/>
            <person name="Kurtz D.B."/>
            <person name="Kwan A."/>
            <person name="Lam B."/>
            <person name="Langin-Hooper S."/>
            <person name="Lee A."/>
            <person name="Lee J.M."/>
            <person name="Lenz C.A."/>
            <person name="Li J.H."/>
            <person name="Li Y.-P."/>
            <person name="Lin X."/>
            <person name="Liu S.X."/>
            <person name="Liu Z.A."/>
            <person name="Luros J.S."/>
            <person name="Maiti R."/>
            <person name="Marziali A."/>
            <person name="Militscher J."/>
            <person name="Miranda M."/>
            <person name="Nguyen M."/>
            <person name="Nierman W.C."/>
            <person name="Osborne B.I."/>
            <person name="Pai G."/>
            <person name="Peterson J."/>
            <person name="Pham P.K."/>
            <person name="Rizzo M."/>
            <person name="Rooney T."/>
            <person name="Rowley D."/>
            <person name="Sakano H."/>
            <person name="Salzberg S.L."/>
            <person name="Schwartz J.R."/>
            <person name="Shinn P."/>
            <person name="Southwick A.M."/>
            <person name="Sun H."/>
            <person name="Tallon L.J."/>
            <person name="Tambunga G."/>
            <person name="Toriumi M.J."/>
            <person name="Town C.D."/>
            <person name="Utterback T."/>
            <person name="Van Aken S."/>
            <person name="Vaysberg M."/>
            <person name="Vysotskaia V.S."/>
            <person name="Walker M."/>
            <person name="Wu D."/>
            <person name="Yu G."/>
            <person name="Fraser C.M."/>
            <person name="Venter J.C."/>
            <person name="Davis R.W."/>
        </authorList>
    </citation>
    <scope>NUCLEOTIDE SEQUENCE [LARGE SCALE GENOMIC DNA]</scope>
    <source>
        <strain>cv. Columbia</strain>
    </source>
</reference>
<reference key="2">
    <citation type="journal article" date="2017" name="Plant J.">
        <title>Araport11: a complete reannotation of the Arabidopsis thaliana reference genome.</title>
        <authorList>
            <person name="Cheng C.Y."/>
            <person name="Krishnakumar V."/>
            <person name="Chan A.P."/>
            <person name="Thibaud-Nissen F."/>
            <person name="Schobel S."/>
            <person name="Town C.D."/>
        </authorList>
    </citation>
    <scope>GENOME REANNOTATION</scope>
    <source>
        <strain>cv. Columbia</strain>
    </source>
</reference>
<reference key="3">
    <citation type="submission" date="2006-08" db="EMBL/GenBank/DDBJ databases">
        <title>Arabidopsis ORF clones.</title>
        <authorList>
            <person name="Quinitio C."/>
            <person name="Chen H."/>
            <person name="Kim C.J."/>
            <person name="Shinn P."/>
            <person name="Ecker J.R."/>
        </authorList>
    </citation>
    <scope>NUCLEOTIDE SEQUENCE [LARGE SCALE MRNA]</scope>
    <source>
        <strain>cv. Columbia</strain>
    </source>
</reference>
<reference key="4">
    <citation type="journal article" date="2003" name="Science">
        <title>Empirical analysis of transcriptional activity in the Arabidopsis genome.</title>
        <authorList>
            <person name="Yamada K."/>
            <person name="Lim J."/>
            <person name="Dale J.M."/>
            <person name="Chen H."/>
            <person name="Shinn P."/>
            <person name="Palm C.J."/>
            <person name="Southwick A.M."/>
            <person name="Wu H.C."/>
            <person name="Kim C.J."/>
            <person name="Nguyen M."/>
            <person name="Pham P.K."/>
            <person name="Cheuk R.F."/>
            <person name="Karlin-Newmann G."/>
            <person name="Liu S.X."/>
            <person name="Lam B."/>
            <person name="Sakano H."/>
            <person name="Wu T."/>
            <person name="Yu G."/>
            <person name="Miranda M."/>
            <person name="Quach H.L."/>
            <person name="Tripp M."/>
            <person name="Chang C.H."/>
            <person name="Lee J.M."/>
            <person name="Toriumi M.J."/>
            <person name="Chan M.M."/>
            <person name="Tang C.C."/>
            <person name="Onodera C.S."/>
            <person name="Deng J.M."/>
            <person name="Akiyama K."/>
            <person name="Ansari Y."/>
            <person name="Arakawa T."/>
            <person name="Banh J."/>
            <person name="Banno F."/>
            <person name="Bowser L."/>
            <person name="Brooks S.Y."/>
            <person name="Carninci P."/>
            <person name="Chao Q."/>
            <person name="Choy N."/>
            <person name="Enju A."/>
            <person name="Goldsmith A.D."/>
            <person name="Gurjal M."/>
            <person name="Hansen N.F."/>
            <person name="Hayashizaki Y."/>
            <person name="Johnson-Hopson C."/>
            <person name="Hsuan V.W."/>
            <person name="Iida K."/>
            <person name="Karnes M."/>
            <person name="Khan S."/>
            <person name="Koesema E."/>
            <person name="Ishida J."/>
            <person name="Jiang P.X."/>
            <person name="Jones T."/>
            <person name="Kawai J."/>
            <person name="Kamiya A."/>
            <person name="Meyers C."/>
            <person name="Nakajima M."/>
            <person name="Narusaka M."/>
            <person name="Seki M."/>
            <person name="Sakurai T."/>
            <person name="Satou M."/>
            <person name="Tamse R."/>
            <person name="Vaysberg M."/>
            <person name="Wallender E.K."/>
            <person name="Wong C."/>
            <person name="Yamamura Y."/>
            <person name="Yuan S."/>
            <person name="Shinozaki K."/>
            <person name="Davis R.W."/>
            <person name="Theologis A."/>
            <person name="Ecker J.R."/>
        </authorList>
    </citation>
    <scope>NUCLEOTIDE SEQUENCE [LARGE SCALE MRNA] OF 3-459</scope>
    <source>
        <strain>cv. Columbia</strain>
    </source>
</reference>